<reference key="1">
    <citation type="journal article" date="2001" name="Genome Res.">
        <title>The complete genome sequence of the lactic acid bacterium Lactococcus lactis ssp. lactis IL1403.</title>
        <authorList>
            <person name="Bolotin A."/>
            <person name="Wincker P."/>
            <person name="Mauger S."/>
            <person name="Jaillon O."/>
            <person name="Malarme K."/>
            <person name="Weissenbach J."/>
            <person name="Ehrlich S.D."/>
            <person name="Sorokin A."/>
        </authorList>
    </citation>
    <scope>NUCLEOTIDE SEQUENCE [LARGE SCALE GENOMIC DNA]</scope>
    <source>
        <strain>IL1403</strain>
    </source>
</reference>
<gene>
    <name evidence="1" type="primary">argB</name>
    <name type="ordered locus">LL0800</name>
    <name type="ORF">L0107</name>
</gene>
<dbReference type="EC" id="2.7.2.8" evidence="1"/>
<dbReference type="EMBL" id="AE005176">
    <property type="protein sequence ID" value="AAK04898.1"/>
    <property type="molecule type" value="Genomic_DNA"/>
</dbReference>
<dbReference type="PIR" id="H86724">
    <property type="entry name" value="H86724"/>
</dbReference>
<dbReference type="RefSeq" id="NP_266956.1">
    <property type="nucleotide sequence ID" value="NC_002662.1"/>
</dbReference>
<dbReference type="RefSeq" id="WP_010905567.1">
    <property type="nucleotide sequence ID" value="NC_002662.1"/>
</dbReference>
<dbReference type="SMR" id="Q9CHD2"/>
<dbReference type="PaxDb" id="272623-L0107"/>
<dbReference type="EnsemblBacteria" id="AAK04898">
    <property type="protein sequence ID" value="AAK04898"/>
    <property type="gene ID" value="L0107"/>
</dbReference>
<dbReference type="KEGG" id="lla:L0107"/>
<dbReference type="PATRIC" id="fig|272623.7.peg.856"/>
<dbReference type="eggNOG" id="COG0548">
    <property type="taxonomic scope" value="Bacteria"/>
</dbReference>
<dbReference type="HOGENOM" id="CLU_053680_0_0_9"/>
<dbReference type="OrthoDB" id="9803155at2"/>
<dbReference type="UniPathway" id="UPA00068">
    <property type="reaction ID" value="UER00107"/>
</dbReference>
<dbReference type="Proteomes" id="UP000002196">
    <property type="component" value="Chromosome"/>
</dbReference>
<dbReference type="GO" id="GO:0005737">
    <property type="term" value="C:cytoplasm"/>
    <property type="evidence" value="ECO:0007669"/>
    <property type="project" value="UniProtKB-SubCell"/>
</dbReference>
<dbReference type="GO" id="GO:0003991">
    <property type="term" value="F:acetylglutamate kinase activity"/>
    <property type="evidence" value="ECO:0007669"/>
    <property type="project" value="UniProtKB-UniRule"/>
</dbReference>
<dbReference type="GO" id="GO:0005524">
    <property type="term" value="F:ATP binding"/>
    <property type="evidence" value="ECO:0007669"/>
    <property type="project" value="UniProtKB-UniRule"/>
</dbReference>
<dbReference type="GO" id="GO:0042450">
    <property type="term" value="P:arginine biosynthetic process via ornithine"/>
    <property type="evidence" value="ECO:0007669"/>
    <property type="project" value="UniProtKB-UniRule"/>
</dbReference>
<dbReference type="GO" id="GO:0006526">
    <property type="term" value="P:L-arginine biosynthetic process"/>
    <property type="evidence" value="ECO:0007669"/>
    <property type="project" value="UniProtKB-UniPathway"/>
</dbReference>
<dbReference type="CDD" id="cd04250">
    <property type="entry name" value="AAK_NAGK-C"/>
    <property type="match status" value="1"/>
</dbReference>
<dbReference type="FunFam" id="3.40.1160.10:FF:000004">
    <property type="entry name" value="Acetylglutamate kinase"/>
    <property type="match status" value="1"/>
</dbReference>
<dbReference type="Gene3D" id="3.40.1160.10">
    <property type="entry name" value="Acetylglutamate kinase-like"/>
    <property type="match status" value="1"/>
</dbReference>
<dbReference type="HAMAP" id="MF_00082">
    <property type="entry name" value="ArgB"/>
    <property type="match status" value="1"/>
</dbReference>
<dbReference type="InterPro" id="IPR036393">
    <property type="entry name" value="AceGlu_kinase-like_sf"/>
</dbReference>
<dbReference type="InterPro" id="IPR004662">
    <property type="entry name" value="AcgluKinase_fam"/>
</dbReference>
<dbReference type="InterPro" id="IPR037528">
    <property type="entry name" value="ArgB"/>
</dbReference>
<dbReference type="InterPro" id="IPR001048">
    <property type="entry name" value="Asp/Glu/Uridylate_kinase"/>
</dbReference>
<dbReference type="InterPro" id="IPR001057">
    <property type="entry name" value="Glu/AcGlu_kinase"/>
</dbReference>
<dbReference type="InterPro" id="IPR041727">
    <property type="entry name" value="NAGK-C"/>
</dbReference>
<dbReference type="NCBIfam" id="TIGR00761">
    <property type="entry name" value="argB"/>
    <property type="match status" value="1"/>
</dbReference>
<dbReference type="PANTHER" id="PTHR23342">
    <property type="entry name" value="N-ACETYLGLUTAMATE SYNTHASE"/>
    <property type="match status" value="1"/>
</dbReference>
<dbReference type="PANTHER" id="PTHR23342:SF0">
    <property type="entry name" value="N-ACETYLGLUTAMATE SYNTHASE, MITOCHONDRIAL"/>
    <property type="match status" value="1"/>
</dbReference>
<dbReference type="Pfam" id="PF00696">
    <property type="entry name" value="AA_kinase"/>
    <property type="match status" value="1"/>
</dbReference>
<dbReference type="PIRSF" id="PIRSF000728">
    <property type="entry name" value="NAGK"/>
    <property type="match status" value="1"/>
</dbReference>
<dbReference type="PRINTS" id="PR00474">
    <property type="entry name" value="GLU5KINASE"/>
</dbReference>
<dbReference type="SUPFAM" id="SSF53633">
    <property type="entry name" value="Carbamate kinase-like"/>
    <property type="match status" value="1"/>
</dbReference>
<accession>Q9CHD2</accession>
<evidence type="ECO:0000255" key="1">
    <source>
        <dbReference type="HAMAP-Rule" id="MF_00082"/>
    </source>
</evidence>
<keyword id="KW-0028">Amino-acid biosynthesis</keyword>
<keyword id="KW-0055">Arginine biosynthesis</keyword>
<keyword id="KW-0067">ATP-binding</keyword>
<keyword id="KW-0963">Cytoplasm</keyword>
<keyword id="KW-0418">Kinase</keyword>
<keyword id="KW-0547">Nucleotide-binding</keyword>
<keyword id="KW-1185">Reference proteome</keyword>
<keyword id="KW-0808">Transferase</keyword>
<sequence>MRDSQNTAQTLTESLKYFLKYRDQTVVIKYGGNAMIDEKVKESILKDILLLKTVGIKVVLVHGGGPAIGELLEKYEQKSQFVQGLRVTDKKTAQLALTALAGKVNKSLVQDIIRLGGNAIGVSGIDGKLIEAKPISEDLDYVGEITAIHPEIIERINQTDAVPVIASAGIGLDGEIYNVNADTAASRIAGALSAEQFILLSDVRGLYGNFPDEESFIDEINLTNLEKLVKEKKITDRMIPKIEAIKYAMFEGLGQAVLLDGRVPHALLLELFTDKGQGTMINH</sequence>
<organism>
    <name type="scientific">Lactococcus lactis subsp. lactis (strain IL1403)</name>
    <name type="common">Streptococcus lactis</name>
    <dbReference type="NCBI Taxonomy" id="272623"/>
    <lineage>
        <taxon>Bacteria</taxon>
        <taxon>Bacillati</taxon>
        <taxon>Bacillota</taxon>
        <taxon>Bacilli</taxon>
        <taxon>Lactobacillales</taxon>
        <taxon>Streptococcaceae</taxon>
        <taxon>Lactococcus</taxon>
    </lineage>
</organism>
<proteinExistence type="inferred from homology"/>
<protein>
    <recommendedName>
        <fullName evidence="1">Acetylglutamate kinase</fullName>
        <ecNumber evidence="1">2.7.2.8</ecNumber>
    </recommendedName>
    <alternativeName>
        <fullName evidence="1">N-acetyl-L-glutamate 5-phosphotransferase</fullName>
    </alternativeName>
    <alternativeName>
        <fullName evidence="1">NAG kinase</fullName>
        <shortName evidence="1">NAGK</shortName>
    </alternativeName>
</protein>
<comment type="function">
    <text evidence="1">Catalyzes the ATP-dependent phosphorylation of N-acetyl-L-glutamate.</text>
</comment>
<comment type="catalytic activity">
    <reaction evidence="1">
        <text>N-acetyl-L-glutamate + ATP = N-acetyl-L-glutamyl 5-phosphate + ADP</text>
        <dbReference type="Rhea" id="RHEA:14629"/>
        <dbReference type="ChEBI" id="CHEBI:30616"/>
        <dbReference type="ChEBI" id="CHEBI:44337"/>
        <dbReference type="ChEBI" id="CHEBI:57936"/>
        <dbReference type="ChEBI" id="CHEBI:456216"/>
        <dbReference type="EC" id="2.7.2.8"/>
    </reaction>
</comment>
<comment type="pathway">
    <text evidence="1">Amino-acid biosynthesis; L-arginine biosynthesis; N(2)-acetyl-L-ornithine from L-glutamate: step 2/4.</text>
</comment>
<comment type="subcellular location">
    <subcellularLocation>
        <location evidence="1">Cytoplasm</location>
    </subcellularLocation>
</comment>
<comment type="similarity">
    <text evidence="1">Belongs to the acetylglutamate kinase family. ArgB subfamily.</text>
</comment>
<feature type="chain" id="PRO_0000112622" description="Acetylglutamate kinase">
    <location>
        <begin position="1"/>
        <end position="283"/>
    </location>
</feature>
<feature type="binding site" evidence="1">
    <location>
        <begin position="64"/>
        <end position="65"/>
    </location>
    <ligand>
        <name>substrate</name>
    </ligand>
</feature>
<feature type="binding site" evidence="1">
    <location>
        <position position="86"/>
    </location>
    <ligand>
        <name>substrate</name>
    </ligand>
</feature>
<feature type="binding site" evidence="1">
    <location>
        <position position="178"/>
    </location>
    <ligand>
        <name>substrate</name>
    </ligand>
</feature>
<feature type="site" description="Transition state stabilizer" evidence="1">
    <location>
        <position position="29"/>
    </location>
</feature>
<feature type="site" description="Transition state stabilizer" evidence="1">
    <location>
        <position position="241"/>
    </location>
</feature>
<name>ARGB_LACLA</name>